<sequence length="145" mass="16784">MRHRKQGRKFGRTSSHRKAMFKNMSASLINHELIKTTLPKAKELRTIVEPLVTLAKREHKLRQELDTNSNEFKAQSVALRRQAFDFLRNKAAVTKLFEEFGARYAERAGGYTRILKCGYRFGDKAPMAFIELVDRPQVEEAADEE</sequence>
<keyword id="KW-0687">Ribonucleoprotein</keyword>
<keyword id="KW-0689">Ribosomal protein</keyword>
<reference key="1">
    <citation type="journal article" date="2007" name="Genome Biol.">
        <title>Comparison of Francisella tularensis genomes reveals evolutionary events associated with the emergence of human pathogenic strains.</title>
        <authorList>
            <person name="Rohmer L."/>
            <person name="Fong C."/>
            <person name="Abmayr S."/>
            <person name="Wasnick M."/>
            <person name="Larson Freeman T.J."/>
            <person name="Radey M."/>
            <person name="Guina T."/>
            <person name="Svensson K."/>
            <person name="Hayden H.S."/>
            <person name="Jacobs M."/>
            <person name="Gallagher L.A."/>
            <person name="Manoil C."/>
            <person name="Ernst R.K."/>
            <person name="Drees B."/>
            <person name="Buckley D."/>
            <person name="Haugen E."/>
            <person name="Bovee D."/>
            <person name="Zhou Y."/>
            <person name="Chang J."/>
            <person name="Levy R."/>
            <person name="Lim R."/>
            <person name="Gillett W."/>
            <person name="Guenthener D."/>
            <person name="Kang A."/>
            <person name="Shaffer S.A."/>
            <person name="Taylor G."/>
            <person name="Chen J."/>
            <person name="Gallis B."/>
            <person name="D'Argenio D.A."/>
            <person name="Forsman M."/>
            <person name="Olson M.V."/>
            <person name="Goodlett D.R."/>
            <person name="Kaul R."/>
            <person name="Miller S.I."/>
            <person name="Brittnacher M.J."/>
        </authorList>
    </citation>
    <scope>NUCLEOTIDE SEQUENCE [LARGE SCALE GENOMIC DNA]</scope>
    <source>
        <strain>U112</strain>
    </source>
</reference>
<evidence type="ECO:0000255" key="1">
    <source>
        <dbReference type="HAMAP-Rule" id="MF_01368"/>
    </source>
</evidence>
<evidence type="ECO:0000305" key="2"/>
<gene>
    <name evidence="1" type="primary">rplQ</name>
    <name type="ordered locus">FTN_0265</name>
</gene>
<name>RL17_FRATN</name>
<feature type="chain" id="PRO_1000055830" description="Large ribosomal subunit protein bL17">
    <location>
        <begin position="1"/>
        <end position="145"/>
    </location>
</feature>
<proteinExistence type="inferred from homology"/>
<organism>
    <name type="scientific">Francisella tularensis subsp. novicida (strain U112)</name>
    <dbReference type="NCBI Taxonomy" id="401614"/>
    <lineage>
        <taxon>Bacteria</taxon>
        <taxon>Pseudomonadati</taxon>
        <taxon>Pseudomonadota</taxon>
        <taxon>Gammaproteobacteria</taxon>
        <taxon>Thiotrichales</taxon>
        <taxon>Francisellaceae</taxon>
        <taxon>Francisella</taxon>
    </lineage>
</organism>
<accession>A0Q4K9</accession>
<comment type="subunit">
    <text evidence="1">Part of the 50S ribosomal subunit. Contacts protein L32.</text>
</comment>
<comment type="similarity">
    <text evidence="1">Belongs to the bacterial ribosomal protein bL17 family.</text>
</comment>
<dbReference type="EMBL" id="CP000439">
    <property type="protein sequence ID" value="ABK89174.1"/>
    <property type="molecule type" value="Genomic_DNA"/>
</dbReference>
<dbReference type="RefSeq" id="WP_003014382.1">
    <property type="nucleotide sequence ID" value="NZ_CP009633.1"/>
</dbReference>
<dbReference type="SMR" id="A0Q4K9"/>
<dbReference type="GeneID" id="75264235"/>
<dbReference type="KEGG" id="ftn:FTN_0265"/>
<dbReference type="KEGG" id="ftx:AW25_1777"/>
<dbReference type="BioCyc" id="FTUL401614:G1G75-276-MONOMER"/>
<dbReference type="Proteomes" id="UP000000762">
    <property type="component" value="Chromosome"/>
</dbReference>
<dbReference type="GO" id="GO:0022625">
    <property type="term" value="C:cytosolic large ribosomal subunit"/>
    <property type="evidence" value="ECO:0007669"/>
    <property type="project" value="TreeGrafter"/>
</dbReference>
<dbReference type="GO" id="GO:0003735">
    <property type="term" value="F:structural constituent of ribosome"/>
    <property type="evidence" value="ECO:0007669"/>
    <property type="project" value="InterPro"/>
</dbReference>
<dbReference type="GO" id="GO:0006412">
    <property type="term" value="P:translation"/>
    <property type="evidence" value="ECO:0007669"/>
    <property type="project" value="UniProtKB-UniRule"/>
</dbReference>
<dbReference type="Gene3D" id="3.90.1030.10">
    <property type="entry name" value="Ribosomal protein L17"/>
    <property type="match status" value="1"/>
</dbReference>
<dbReference type="HAMAP" id="MF_01368">
    <property type="entry name" value="Ribosomal_bL17"/>
    <property type="match status" value="1"/>
</dbReference>
<dbReference type="InterPro" id="IPR000456">
    <property type="entry name" value="Ribosomal_bL17"/>
</dbReference>
<dbReference type="InterPro" id="IPR047859">
    <property type="entry name" value="Ribosomal_bL17_CS"/>
</dbReference>
<dbReference type="InterPro" id="IPR036373">
    <property type="entry name" value="Ribosomal_bL17_sf"/>
</dbReference>
<dbReference type="NCBIfam" id="TIGR00059">
    <property type="entry name" value="L17"/>
    <property type="match status" value="1"/>
</dbReference>
<dbReference type="PANTHER" id="PTHR14413:SF16">
    <property type="entry name" value="LARGE RIBOSOMAL SUBUNIT PROTEIN BL17M"/>
    <property type="match status" value="1"/>
</dbReference>
<dbReference type="PANTHER" id="PTHR14413">
    <property type="entry name" value="RIBOSOMAL PROTEIN L17"/>
    <property type="match status" value="1"/>
</dbReference>
<dbReference type="Pfam" id="PF01196">
    <property type="entry name" value="Ribosomal_L17"/>
    <property type="match status" value="1"/>
</dbReference>
<dbReference type="SUPFAM" id="SSF64263">
    <property type="entry name" value="Prokaryotic ribosomal protein L17"/>
    <property type="match status" value="1"/>
</dbReference>
<dbReference type="PROSITE" id="PS01167">
    <property type="entry name" value="RIBOSOMAL_L17"/>
    <property type="match status" value="1"/>
</dbReference>
<protein>
    <recommendedName>
        <fullName evidence="1">Large ribosomal subunit protein bL17</fullName>
    </recommendedName>
    <alternativeName>
        <fullName evidence="2">50S ribosomal protein L17</fullName>
    </alternativeName>
</protein>